<feature type="signal peptide" evidence="3">
    <location>
        <begin position="1"/>
        <end position="31"/>
    </location>
</feature>
<feature type="propeptide" id="PRO_0000436891" evidence="8">
    <location>
        <begin position="32"/>
        <end position="48"/>
    </location>
</feature>
<feature type="chain" id="PRO_0000007586" description="Fibrillin-3">
    <location>
        <begin position="49"/>
        <end position="2689"/>
    </location>
</feature>
<feature type="chain" id="PRO_0000436892" description="Fibrillin-3 C-terminal peptide" evidence="2">
    <location>
        <begin position="2690"/>
        <end position="2809"/>
    </location>
</feature>
<feature type="domain" description="EGF-like 1" evidence="4">
    <location>
        <begin position="147"/>
        <end position="179"/>
    </location>
</feature>
<feature type="domain" description="TB 1">
    <location>
        <begin position="185"/>
        <end position="237"/>
    </location>
</feature>
<feature type="domain" description="EGF-like 2; calcium-binding" evidence="4">
    <location>
        <begin position="247"/>
        <end position="288"/>
    </location>
</feature>
<feature type="domain" description="TB 2">
    <location>
        <begin position="293"/>
        <end position="346"/>
    </location>
</feature>
<feature type="domain" description="EGF-like 3" evidence="4">
    <location>
        <begin position="408"/>
        <end position="448"/>
    </location>
</feature>
<feature type="domain" description="EGF-like 4; calcium-binding" evidence="4">
    <location>
        <begin position="449"/>
        <end position="488"/>
    </location>
</feature>
<feature type="domain" description="EGF-like 5; calcium-binding" evidence="4">
    <location>
        <begin position="489"/>
        <end position="530"/>
    </location>
</feature>
<feature type="domain" description="EGF-like 6; calcium-binding" evidence="4">
    <location>
        <begin position="531"/>
        <end position="571"/>
    </location>
</feature>
<feature type="domain" description="EGF-like 7; calcium-binding" evidence="4">
    <location>
        <begin position="572"/>
        <end position="612"/>
    </location>
</feature>
<feature type="domain" description="TB 3">
    <location>
        <begin position="618"/>
        <end position="670"/>
    </location>
</feature>
<feature type="domain" description="EGF-like 8; calcium-binding" evidence="4">
    <location>
        <begin position="682"/>
        <end position="723"/>
    </location>
</feature>
<feature type="domain" description="EGF-like 9; calcium-binding" evidence="4">
    <location>
        <begin position="724"/>
        <end position="765"/>
    </location>
</feature>
<feature type="domain" description="EGF-like 10; calcium-binding" evidence="4">
    <location>
        <begin position="766"/>
        <end position="805"/>
    </location>
</feature>
<feature type="domain" description="TB 4">
    <location>
        <begin position="810"/>
        <end position="861"/>
    </location>
</feature>
<feature type="domain" description="EGF-like 11; calcium-binding" evidence="4">
    <location>
        <begin position="869"/>
        <end position="910"/>
    </location>
</feature>
<feature type="domain" description="TB 5">
    <location>
        <begin position="915"/>
        <end position="966"/>
    </location>
</feature>
<feature type="domain" description="EGF-like 12; calcium-binding" evidence="4">
    <location>
        <begin position="986"/>
        <end position="1027"/>
    </location>
</feature>
<feature type="domain" description="EGF-like 13; calcium-binding" evidence="4">
    <location>
        <begin position="1028"/>
        <end position="1070"/>
    </location>
</feature>
<feature type="domain" description="EGF-like 14; calcium-binding" evidence="4">
    <location>
        <begin position="1071"/>
        <end position="1112"/>
    </location>
</feature>
<feature type="domain" description="EGF-like 15; calcium-binding" evidence="4">
    <location>
        <begin position="1113"/>
        <end position="1154"/>
    </location>
</feature>
<feature type="domain" description="EGF-like 16; calcium-binding" evidence="4">
    <location>
        <begin position="1155"/>
        <end position="1195"/>
    </location>
</feature>
<feature type="domain" description="EGF-like 17" evidence="4">
    <location>
        <begin position="1196"/>
        <end position="1237"/>
    </location>
</feature>
<feature type="domain" description="EGF-like 18; calcium-binding" evidence="4">
    <location>
        <begin position="1238"/>
        <end position="1279"/>
    </location>
</feature>
<feature type="domain" description="EGF-like 19; calcium-binding" evidence="4">
    <location>
        <begin position="1280"/>
        <end position="1320"/>
    </location>
</feature>
<feature type="domain" description="EGF-like 20; calcium-binding" evidence="4">
    <location>
        <begin position="1321"/>
        <end position="1361"/>
    </location>
</feature>
<feature type="domain" description="EGF-like 21; calcium-binding" evidence="4">
    <location>
        <begin position="1362"/>
        <end position="1403"/>
    </location>
</feature>
<feature type="domain" description="EGF-like 22; calcium-binding" evidence="4">
    <location>
        <begin position="1404"/>
        <end position="1444"/>
    </location>
</feature>
<feature type="domain" description="EGF-like 23; calcium-binding" evidence="4">
    <location>
        <begin position="1445"/>
        <end position="1485"/>
    </location>
</feature>
<feature type="domain" description="TB 6">
    <location>
        <begin position="1490"/>
        <end position="1546"/>
    </location>
</feature>
<feature type="domain" description="EGF-like 24; calcium-binding" evidence="4">
    <location>
        <begin position="1563"/>
        <end position="1604"/>
    </location>
</feature>
<feature type="domain" description="EGF-like 25; calcium-binding" evidence="4">
    <location>
        <begin position="1605"/>
        <end position="1646"/>
    </location>
</feature>
<feature type="domain" description="TB 7">
    <location>
        <begin position="1651"/>
        <end position="1703"/>
    </location>
</feature>
<feature type="domain" description="EGF-like 26; calcium-binding" evidence="4">
    <location>
        <begin position="1721"/>
        <end position="1762"/>
    </location>
</feature>
<feature type="domain" description="EGF-like 27; calcium-binding" evidence="4">
    <location>
        <begin position="1763"/>
        <end position="1804"/>
    </location>
</feature>
<feature type="domain" description="EGF-like 28" evidence="4">
    <location>
        <begin position="1805"/>
        <end position="1846"/>
    </location>
</feature>
<feature type="domain" description="EGF-like 29; calcium-binding" evidence="4">
    <location>
        <begin position="1847"/>
        <end position="1885"/>
    </location>
</feature>
<feature type="domain" description="EGF-like 30; calcium-binding" evidence="4">
    <location>
        <begin position="1886"/>
        <end position="1928"/>
    </location>
</feature>
<feature type="domain" description="EGF-like 31; calcium-binding" evidence="4">
    <location>
        <begin position="1929"/>
        <end position="1968"/>
    </location>
</feature>
<feature type="domain" description="EGF-like 32; calcium-binding" evidence="4">
    <location>
        <begin position="1969"/>
        <end position="2010"/>
    </location>
</feature>
<feature type="domain" description="TB 8">
    <location>
        <begin position="2015"/>
        <end position="2068"/>
    </location>
</feature>
<feature type="domain" description="EGF-like 33; calcium-binding" evidence="4">
    <location>
        <begin position="2084"/>
        <end position="2125"/>
    </location>
</feature>
<feature type="domain" description="EGF-like 34; calcium-binding" evidence="4">
    <location>
        <begin position="2126"/>
        <end position="2165"/>
    </location>
</feature>
<feature type="domain" description="EGF-like 35; calcium-binding" evidence="4">
    <location>
        <begin position="2166"/>
        <end position="2206"/>
    </location>
</feature>
<feature type="domain" description="EGF-like 36; calcium-binding" evidence="4">
    <location>
        <begin position="2207"/>
        <end position="2251"/>
    </location>
</feature>
<feature type="domain" description="EGF-like 37; calcium-binding" evidence="4">
    <location>
        <begin position="2252"/>
        <end position="2293"/>
    </location>
</feature>
<feature type="domain" description="TB 9">
    <location>
        <begin position="2298"/>
        <end position="2351"/>
    </location>
</feature>
<feature type="domain" description="EGF-like 38; calcium-binding" evidence="4">
    <location>
        <begin position="2363"/>
        <end position="2404"/>
    </location>
</feature>
<feature type="domain" description="EGF-like 39; calcium-binding" evidence="4">
    <location>
        <begin position="2405"/>
        <end position="2445"/>
    </location>
</feature>
<feature type="domain" description="EGF-like 40; calcium-binding" evidence="4">
    <location>
        <begin position="2446"/>
        <end position="2484"/>
    </location>
</feature>
<feature type="domain" description="EGF-like 41; calcium-binding" evidence="4">
    <location>
        <begin position="2485"/>
        <end position="2527"/>
    </location>
</feature>
<feature type="domain" description="EGF-like 42; calcium-binding" evidence="4">
    <location>
        <begin position="2528"/>
        <end position="2567"/>
    </location>
</feature>
<feature type="domain" description="EGF-like 43; calcium-binding" evidence="4">
    <location>
        <begin position="2568"/>
        <end position="2609"/>
    </location>
</feature>
<feature type="domain" description="EGF-like 44; calcium-binding" evidence="4">
    <location>
        <begin position="2610"/>
        <end position="2649"/>
    </location>
</feature>
<feature type="glycosylation site" description="N-linked (GlcNAc...) asparagine" evidence="3">
    <location>
        <position position="406"/>
    </location>
</feature>
<feature type="glycosylation site" description="N-linked (GlcNAc...) asparagine" evidence="3">
    <location>
        <position position="1025"/>
    </location>
</feature>
<feature type="glycosylation site" description="N-linked (GlcNAc...) asparagine" evidence="3">
    <location>
        <position position="1442"/>
    </location>
</feature>
<feature type="glycosylation site" description="N-linked (GlcNAc...) asparagine" evidence="3">
    <location>
        <position position="1538"/>
    </location>
</feature>
<feature type="glycosylation site" description="N-linked (GlcNAc...) asparagine" evidence="3">
    <location>
        <position position="1627"/>
    </location>
</feature>
<feature type="glycosylation site" description="N-linked (GlcNAc...) asparagine" evidence="3">
    <location>
        <position position="1658"/>
    </location>
</feature>
<feature type="glycosylation site" description="N-linked (GlcNAc...) asparagine" evidence="3">
    <location>
        <position position="1668"/>
    </location>
</feature>
<feature type="glycosylation site" description="N-linked (GlcNAc...) asparagine" evidence="3">
    <location>
        <position position="1858"/>
    </location>
</feature>
<feature type="glycosylation site" description="N-linked (GlcNAc...) asparagine" evidence="3">
    <location>
        <position position="2033"/>
    </location>
</feature>
<feature type="glycosylation site" description="N-linked (GlcNAc...) asparagine" evidence="3">
    <location>
        <position position="2713"/>
    </location>
</feature>
<feature type="disulfide bond" evidence="4">
    <location>
        <begin position="151"/>
        <end position="161"/>
    </location>
</feature>
<feature type="disulfide bond" evidence="4">
    <location>
        <begin position="155"/>
        <end position="167"/>
    </location>
</feature>
<feature type="disulfide bond" evidence="4">
    <location>
        <begin position="169"/>
        <end position="178"/>
    </location>
</feature>
<feature type="disulfide bond" evidence="4">
    <location>
        <begin position="251"/>
        <end position="263"/>
    </location>
</feature>
<feature type="disulfide bond" evidence="4">
    <location>
        <begin position="258"/>
        <end position="272"/>
    </location>
</feature>
<feature type="disulfide bond" evidence="4">
    <location>
        <begin position="274"/>
        <end position="287"/>
    </location>
</feature>
<feature type="disulfide bond" evidence="4">
    <location>
        <begin position="412"/>
        <end position="424"/>
    </location>
</feature>
<feature type="disulfide bond" evidence="4">
    <location>
        <begin position="419"/>
        <end position="433"/>
    </location>
</feature>
<feature type="disulfide bond" evidence="4">
    <location>
        <begin position="435"/>
        <end position="447"/>
    </location>
</feature>
<feature type="disulfide bond" evidence="4">
    <location>
        <begin position="453"/>
        <end position="463"/>
    </location>
</feature>
<feature type="disulfide bond" evidence="4">
    <location>
        <begin position="458"/>
        <end position="472"/>
    </location>
</feature>
<feature type="disulfide bond" evidence="4">
    <location>
        <begin position="474"/>
        <end position="487"/>
    </location>
</feature>
<feature type="disulfide bond" evidence="4">
    <location>
        <begin position="493"/>
        <end position="505"/>
    </location>
</feature>
<feature type="disulfide bond" evidence="4">
    <location>
        <begin position="500"/>
        <end position="514"/>
    </location>
</feature>
<feature type="disulfide bond" evidence="4">
    <location>
        <begin position="516"/>
        <end position="529"/>
    </location>
</feature>
<feature type="disulfide bond" evidence="4">
    <location>
        <begin position="535"/>
        <end position="546"/>
    </location>
</feature>
<feature type="disulfide bond" evidence="4">
    <location>
        <begin position="541"/>
        <end position="555"/>
    </location>
</feature>
<feature type="disulfide bond" evidence="4">
    <location>
        <begin position="557"/>
        <end position="570"/>
    </location>
</feature>
<feature type="disulfide bond" evidence="4">
    <location>
        <begin position="576"/>
        <end position="587"/>
    </location>
</feature>
<feature type="disulfide bond" evidence="4">
    <location>
        <begin position="582"/>
        <end position="596"/>
    </location>
</feature>
<feature type="disulfide bond" evidence="4">
    <location>
        <begin position="598"/>
        <end position="611"/>
    </location>
</feature>
<feature type="disulfide bond" evidence="4">
    <location>
        <begin position="686"/>
        <end position="698"/>
    </location>
</feature>
<feature type="disulfide bond" evidence="4">
    <location>
        <begin position="693"/>
        <end position="707"/>
    </location>
</feature>
<feature type="disulfide bond" evidence="4">
    <location>
        <begin position="709"/>
        <end position="722"/>
    </location>
</feature>
<feature type="disulfide bond" evidence="4">
    <location>
        <begin position="728"/>
        <end position="740"/>
    </location>
</feature>
<feature type="disulfide bond" evidence="4">
    <location>
        <begin position="735"/>
        <end position="749"/>
    </location>
</feature>
<feature type="disulfide bond" evidence="4">
    <location>
        <begin position="751"/>
        <end position="764"/>
    </location>
</feature>
<feature type="disulfide bond" evidence="4">
    <location>
        <begin position="770"/>
        <end position="780"/>
    </location>
</feature>
<feature type="disulfide bond" evidence="4">
    <location>
        <begin position="775"/>
        <end position="789"/>
    </location>
</feature>
<feature type="disulfide bond" evidence="4">
    <location>
        <begin position="791"/>
        <end position="804"/>
    </location>
</feature>
<feature type="disulfide bond" evidence="4">
    <location>
        <begin position="873"/>
        <end position="885"/>
    </location>
</feature>
<feature type="disulfide bond" evidence="4">
    <location>
        <begin position="880"/>
        <end position="894"/>
    </location>
</feature>
<feature type="disulfide bond" evidence="4">
    <location>
        <begin position="896"/>
        <end position="909"/>
    </location>
</feature>
<feature type="disulfide bond" evidence="4">
    <location>
        <begin position="990"/>
        <end position="1002"/>
    </location>
</feature>
<feature type="disulfide bond" evidence="4">
    <location>
        <begin position="997"/>
        <end position="1011"/>
    </location>
</feature>
<feature type="disulfide bond" evidence="4">
    <location>
        <begin position="1013"/>
        <end position="1026"/>
    </location>
</feature>
<feature type="disulfide bond" evidence="4">
    <location>
        <begin position="1032"/>
        <end position="1044"/>
    </location>
</feature>
<feature type="disulfide bond" evidence="4">
    <location>
        <begin position="1039"/>
        <end position="1053"/>
    </location>
</feature>
<feature type="disulfide bond" evidence="4">
    <location>
        <begin position="1055"/>
        <end position="1069"/>
    </location>
</feature>
<feature type="disulfide bond" evidence="4">
    <location>
        <begin position="1075"/>
        <end position="1087"/>
    </location>
</feature>
<feature type="disulfide bond" evidence="4">
    <location>
        <begin position="1082"/>
        <end position="1096"/>
    </location>
</feature>
<feature type="disulfide bond" evidence="4">
    <location>
        <begin position="1098"/>
        <end position="1111"/>
    </location>
</feature>
<feature type="disulfide bond" evidence="4">
    <location>
        <begin position="1117"/>
        <end position="1129"/>
    </location>
</feature>
<feature type="disulfide bond" evidence="4">
    <location>
        <begin position="1124"/>
        <end position="1138"/>
    </location>
</feature>
<feature type="disulfide bond" evidence="4">
    <location>
        <begin position="1140"/>
        <end position="1153"/>
    </location>
</feature>
<feature type="disulfide bond" evidence="4">
    <location>
        <begin position="1159"/>
        <end position="1170"/>
    </location>
</feature>
<feature type="disulfide bond" evidence="4">
    <location>
        <begin position="1166"/>
        <end position="1179"/>
    </location>
</feature>
<feature type="disulfide bond" evidence="4">
    <location>
        <begin position="1181"/>
        <end position="1194"/>
    </location>
</feature>
<feature type="disulfide bond" evidence="4">
    <location>
        <begin position="1200"/>
        <end position="1212"/>
    </location>
</feature>
<feature type="disulfide bond" evidence="4">
    <location>
        <begin position="1207"/>
        <end position="1221"/>
    </location>
</feature>
<feature type="disulfide bond" evidence="4">
    <location>
        <begin position="1223"/>
        <end position="1236"/>
    </location>
</feature>
<feature type="disulfide bond" evidence="4">
    <location>
        <begin position="1242"/>
        <end position="1254"/>
    </location>
</feature>
<feature type="disulfide bond" evidence="4">
    <location>
        <begin position="1249"/>
        <end position="1263"/>
    </location>
</feature>
<feature type="disulfide bond" evidence="4">
    <location>
        <begin position="1265"/>
        <end position="1278"/>
    </location>
</feature>
<feature type="disulfide bond" evidence="4">
    <location>
        <begin position="1284"/>
        <end position="1297"/>
    </location>
</feature>
<feature type="disulfide bond" evidence="4">
    <location>
        <begin position="1291"/>
        <end position="1306"/>
    </location>
</feature>
<feature type="disulfide bond" evidence="4">
    <location>
        <begin position="1308"/>
        <end position="1319"/>
    </location>
</feature>
<feature type="disulfide bond" evidence="4">
    <location>
        <begin position="1325"/>
        <end position="1338"/>
    </location>
</feature>
<feature type="disulfide bond" evidence="4">
    <location>
        <begin position="1332"/>
        <end position="1347"/>
    </location>
</feature>
<feature type="disulfide bond" evidence="4">
    <location>
        <begin position="1349"/>
        <end position="1360"/>
    </location>
</feature>
<feature type="disulfide bond" evidence="4">
    <location>
        <begin position="1366"/>
        <end position="1378"/>
    </location>
</feature>
<feature type="disulfide bond" evidence="4">
    <location>
        <begin position="1373"/>
        <end position="1387"/>
    </location>
</feature>
<feature type="disulfide bond" evidence="4">
    <location>
        <begin position="1389"/>
        <end position="1402"/>
    </location>
</feature>
<feature type="disulfide bond" evidence="4">
    <location>
        <begin position="1408"/>
        <end position="1419"/>
    </location>
</feature>
<feature type="disulfide bond" evidence="4">
    <location>
        <begin position="1414"/>
        <end position="1428"/>
    </location>
</feature>
<feature type="disulfide bond" evidence="4">
    <location>
        <begin position="1430"/>
        <end position="1443"/>
    </location>
</feature>
<feature type="disulfide bond" evidence="4">
    <location>
        <begin position="1449"/>
        <end position="1460"/>
    </location>
</feature>
<feature type="disulfide bond" evidence="4">
    <location>
        <begin position="1455"/>
        <end position="1469"/>
    </location>
</feature>
<feature type="disulfide bond" evidence="4">
    <location>
        <begin position="1471"/>
        <end position="1484"/>
    </location>
</feature>
<feature type="disulfide bond" evidence="4">
    <location>
        <begin position="1567"/>
        <end position="1579"/>
    </location>
</feature>
<feature type="disulfide bond" evidence="4">
    <location>
        <begin position="1574"/>
        <end position="1588"/>
    </location>
</feature>
<feature type="disulfide bond" evidence="4">
    <location>
        <begin position="1590"/>
        <end position="1603"/>
    </location>
</feature>
<feature type="disulfide bond" evidence="4">
    <location>
        <begin position="1609"/>
        <end position="1621"/>
    </location>
</feature>
<feature type="disulfide bond" evidence="4">
    <location>
        <begin position="1616"/>
        <end position="1630"/>
    </location>
</feature>
<feature type="disulfide bond" evidence="4">
    <location>
        <begin position="1632"/>
        <end position="1645"/>
    </location>
</feature>
<feature type="disulfide bond" evidence="4">
    <location>
        <begin position="1725"/>
        <end position="1737"/>
    </location>
</feature>
<feature type="disulfide bond" evidence="4">
    <location>
        <begin position="1732"/>
        <end position="1746"/>
    </location>
</feature>
<feature type="disulfide bond" evidence="4">
    <location>
        <begin position="1748"/>
        <end position="1761"/>
    </location>
</feature>
<feature type="disulfide bond" evidence="4">
    <location>
        <begin position="1767"/>
        <end position="1780"/>
    </location>
</feature>
<feature type="disulfide bond" evidence="4">
    <location>
        <begin position="1774"/>
        <end position="1789"/>
    </location>
</feature>
<feature type="disulfide bond" evidence="4">
    <location>
        <begin position="1791"/>
        <end position="1803"/>
    </location>
</feature>
<feature type="disulfide bond" evidence="4">
    <location>
        <begin position="1809"/>
        <end position="1821"/>
    </location>
</feature>
<feature type="disulfide bond" evidence="4">
    <location>
        <begin position="1816"/>
        <end position="1830"/>
    </location>
</feature>
<feature type="disulfide bond" evidence="4">
    <location>
        <begin position="1832"/>
        <end position="1845"/>
    </location>
</feature>
<feature type="disulfide bond" evidence="4">
    <location>
        <begin position="1851"/>
        <end position="1861"/>
    </location>
</feature>
<feature type="disulfide bond" evidence="4">
    <location>
        <begin position="1856"/>
        <end position="1870"/>
    </location>
</feature>
<feature type="disulfide bond" evidence="4">
    <location>
        <begin position="1872"/>
        <end position="1884"/>
    </location>
</feature>
<feature type="disulfide bond" evidence="4">
    <location>
        <begin position="1890"/>
        <end position="1903"/>
    </location>
</feature>
<feature type="disulfide bond" evidence="4">
    <location>
        <begin position="1898"/>
        <end position="1912"/>
    </location>
</feature>
<feature type="disulfide bond" evidence="4">
    <location>
        <begin position="1914"/>
        <end position="1927"/>
    </location>
</feature>
<feature type="disulfide bond" evidence="4">
    <location>
        <begin position="1933"/>
        <end position="1945"/>
    </location>
</feature>
<feature type="disulfide bond" evidence="4">
    <location>
        <begin position="1940"/>
        <end position="1954"/>
    </location>
</feature>
<feature type="disulfide bond" evidence="4">
    <location>
        <begin position="1956"/>
        <end position="1967"/>
    </location>
</feature>
<feature type="disulfide bond" evidence="4">
    <location>
        <begin position="1973"/>
        <end position="1985"/>
    </location>
</feature>
<feature type="disulfide bond" evidence="4">
    <location>
        <begin position="1980"/>
        <end position="1994"/>
    </location>
</feature>
<feature type="disulfide bond" evidence="4">
    <location>
        <begin position="1996"/>
        <end position="2009"/>
    </location>
</feature>
<feature type="disulfide bond" evidence="4">
    <location>
        <begin position="2088"/>
        <end position="2100"/>
    </location>
</feature>
<feature type="disulfide bond" evidence="4">
    <location>
        <begin position="2095"/>
        <end position="2109"/>
    </location>
</feature>
<feature type="disulfide bond" evidence="4">
    <location>
        <begin position="2111"/>
        <end position="2124"/>
    </location>
</feature>
<feature type="disulfide bond" evidence="4">
    <location>
        <begin position="2130"/>
        <end position="2141"/>
    </location>
</feature>
<feature type="disulfide bond" evidence="4">
    <location>
        <begin position="2136"/>
        <end position="2150"/>
    </location>
</feature>
<feature type="disulfide bond" evidence="4">
    <location>
        <begin position="2152"/>
        <end position="2164"/>
    </location>
</feature>
<feature type="disulfide bond" evidence="4">
    <location>
        <begin position="2170"/>
        <end position="2181"/>
    </location>
</feature>
<feature type="disulfide bond" evidence="4">
    <location>
        <begin position="2177"/>
        <end position="2190"/>
    </location>
</feature>
<feature type="disulfide bond" evidence="4">
    <location>
        <begin position="2192"/>
        <end position="2205"/>
    </location>
</feature>
<feature type="disulfide bond" evidence="4">
    <location>
        <begin position="2211"/>
        <end position="2225"/>
    </location>
</feature>
<feature type="disulfide bond" evidence="4">
    <location>
        <begin position="2218"/>
        <end position="2234"/>
    </location>
</feature>
<feature type="disulfide bond" evidence="4">
    <location>
        <begin position="2236"/>
        <end position="2250"/>
    </location>
</feature>
<feature type="disulfide bond" evidence="4">
    <location>
        <begin position="2256"/>
        <end position="2268"/>
    </location>
</feature>
<feature type="disulfide bond" evidence="4">
    <location>
        <begin position="2263"/>
        <end position="2277"/>
    </location>
</feature>
<feature type="disulfide bond" evidence="4">
    <location>
        <begin position="2279"/>
        <end position="2292"/>
    </location>
</feature>
<feature type="disulfide bond" evidence="4">
    <location>
        <begin position="2367"/>
        <end position="2379"/>
    </location>
</feature>
<feature type="disulfide bond" evidence="4">
    <location>
        <begin position="2374"/>
        <end position="2388"/>
    </location>
</feature>
<feature type="disulfide bond" evidence="4">
    <location>
        <begin position="2390"/>
        <end position="2403"/>
    </location>
</feature>
<feature type="disulfide bond" evidence="4">
    <location>
        <begin position="2409"/>
        <end position="2420"/>
    </location>
</feature>
<feature type="disulfide bond" evidence="4">
    <location>
        <begin position="2416"/>
        <end position="2429"/>
    </location>
</feature>
<feature type="disulfide bond" evidence="4">
    <location>
        <begin position="2431"/>
        <end position="2444"/>
    </location>
</feature>
<feature type="disulfide bond" evidence="4">
    <location>
        <begin position="2450"/>
        <end position="2461"/>
    </location>
</feature>
<feature type="disulfide bond" evidence="4">
    <location>
        <begin position="2457"/>
        <end position="2470"/>
    </location>
</feature>
<feature type="disulfide bond" evidence="4">
    <location>
        <begin position="2472"/>
        <end position="2483"/>
    </location>
</feature>
<feature type="disulfide bond" evidence="4">
    <location>
        <begin position="2489"/>
        <end position="2502"/>
    </location>
</feature>
<feature type="disulfide bond" evidence="4">
    <location>
        <begin position="2496"/>
        <end position="2511"/>
    </location>
</feature>
<feature type="disulfide bond" evidence="4">
    <location>
        <begin position="2513"/>
        <end position="2526"/>
    </location>
</feature>
<feature type="disulfide bond" evidence="4">
    <location>
        <begin position="2532"/>
        <end position="2542"/>
    </location>
</feature>
<feature type="disulfide bond" evidence="4">
    <location>
        <begin position="2538"/>
        <end position="2551"/>
    </location>
</feature>
<feature type="disulfide bond" evidence="4">
    <location>
        <begin position="2553"/>
        <end position="2566"/>
    </location>
</feature>
<feature type="disulfide bond" evidence="4">
    <location>
        <begin position="2572"/>
        <end position="2584"/>
    </location>
</feature>
<feature type="disulfide bond" evidence="4">
    <location>
        <begin position="2579"/>
        <end position="2593"/>
    </location>
</feature>
<feature type="disulfide bond" evidence="4">
    <location>
        <begin position="2595"/>
        <end position="2608"/>
    </location>
</feature>
<feature type="disulfide bond" evidence="4">
    <location>
        <begin position="2614"/>
        <end position="2625"/>
    </location>
</feature>
<feature type="disulfide bond" evidence="4">
    <location>
        <begin position="2621"/>
        <end position="2634"/>
    </location>
</feature>
<feature type="disulfide bond" evidence="4">
    <location>
        <begin position="2636"/>
        <end position="2648"/>
    </location>
</feature>
<feature type="sequence variant" id="VAR_019493" description="In dbSNP:rs3813773.">
    <original>G</original>
    <variation>A</variation>
    <location>
        <position position="119"/>
    </location>
</feature>
<feature type="sequence variant" id="VAR_055736" description="In dbSNP:rs7246376.">
    <original>P</original>
    <variation>L</variation>
    <location>
        <position position="329"/>
    </location>
</feature>
<feature type="sequence variant" id="VAR_055737" description="In dbSNP:rs35999680.">
    <original>M</original>
    <variation>I</variation>
    <location>
        <position position="371"/>
    </location>
</feature>
<feature type="sequence variant" id="VAR_019494" description="In dbSNP:rs35277492." evidence="7">
    <original>R</original>
    <variation>Q</variation>
    <location>
        <position position="473"/>
    </location>
</feature>
<feature type="sequence variant" id="VAR_055738" description="In dbSNP:rs36124795.">
    <original>V</original>
    <variation>I</variation>
    <location>
        <position position="542"/>
    </location>
</feature>
<feature type="sequence variant" id="VAR_019495" description="In dbSNP:rs4804271." evidence="5 6 7">
    <original>D</original>
    <variation>N</variation>
    <location>
        <position position="662"/>
    </location>
</feature>
<feature type="sequence variant" id="VAR_055739" description="In dbSNP:rs35025963.">
    <original>D</original>
    <variation>N</variation>
    <location>
        <position position="868"/>
    </location>
</feature>
<feature type="sequence variant" id="VAR_019496" evidence="7">
    <original>R</original>
    <variation>L</variation>
    <location>
        <position position="935"/>
    </location>
</feature>
<feature type="sequence variant" id="VAR_019497" evidence="7">
    <original>V</original>
    <variation>F</variation>
    <location>
        <position position="938"/>
    </location>
</feature>
<feature type="sequence variant" id="VAR_019498" description="In dbSNP:rs35579498." evidence="7">
    <original>R</original>
    <variation>W</variation>
    <location>
        <position position="1083"/>
    </location>
</feature>
<feature type="sequence variant" id="VAR_055740" description="In dbSNP:rs34684510.">
    <original>Q</original>
    <variation>R</variation>
    <location>
        <position position="1209"/>
    </location>
</feature>
<feature type="sequence variant" id="VAR_055741" description="In dbSNP:rs4804063.">
    <original>S</original>
    <variation>G</variation>
    <location>
        <position position="1293"/>
    </location>
</feature>
<feature type="sequence variant" id="VAR_019499" description="In dbSNP:rs4804063.">
    <original>S</original>
    <variation>N</variation>
    <location>
        <position position="1293"/>
    </location>
</feature>
<feature type="sequence variant" id="VAR_019500" description="In dbSNP:rs12975322." evidence="5">
    <original>V</original>
    <variation>I</variation>
    <location>
        <position position="1326"/>
    </location>
</feature>
<feature type="sequence variant" id="VAR_055742" description="In dbSNP:rs17160194.">
    <original>N</original>
    <variation>I</variation>
    <location>
        <position position="1431"/>
    </location>
</feature>
<feature type="sequence variant" id="VAR_019501" description="In dbSNP:rs33967815." evidence="6 7">
    <original>G</original>
    <variation>S</variation>
    <location>
        <position position="1614"/>
    </location>
</feature>
<feature type="sequence variant" id="VAR_019502" description="In dbSNP:rs3829817." evidence="5">
    <original>R</original>
    <variation>Q</variation>
    <location>
        <position position="1806"/>
    </location>
</feature>
<feature type="sequence variant" id="VAR_055743" description="In dbSNP:rs10404519.">
    <original>E</original>
    <variation>K</variation>
    <location>
        <position position="1850"/>
    </location>
</feature>
<feature type="sequence variant" id="VAR_019503" description="In dbSNP:rs12150963." evidence="7">
    <original>N</original>
    <variation>K</variation>
    <location>
        <position position="1869"/>
    </location>
</feature>
<feature type="sequence variant" id="VAR_055744" description="In dbSNP:rs12608849.">
    <original>L</original>
    <variation>F</variation>
    <location>
        <position position="1904"/>
    </location>
</feature>
<feature type="sequence variant" id="VAR_019504" description="In dbSNP:rs12608849." evidence="7">
    <original>L</original>
    <variation>P</variation>
    <location>
        <position position="1904"/>
    </location>
</feature>
<feature type="sequence variant" id="VAR_055745" description="In dbSNP:rs7245558.">
    <original>T</original>
    <variation>N</variation>
    <location>
        <position position="1939"/>
    </location>
</feature>
<feature type="sequence variant" id="VAR_019505" description="In dbSNP:rs7245429.">
    <original>P</original>
    <variation>H</variation>
    <location>
        <position position="1958"/>
    </location>
</feature>
<feature type="sequence variant" id="VAR_055746" description="In dbSNP:rs34167077.">
    <original>H</original>
    <variation>D</variation>
    <location>
        <position position="1966"/>
    </location>
</feature>
<feature type="sequence variant" id="VAR_055747" description="In dbSNP:rs17202741.">
    <original>N</original>
    <variation>T</variation>
    <location>
        <position position="2005"/>
    </location>
</feature>
<feature type="sequence variant" id="VAR_055748" description="In dbSNP:rs17160151.">
    <original>S</original>
    <variation>N</variation>
    <location>
        <position position="2314"/>
    </location>
</feature>
<feature type="sequence variant" id="VAR_055749" description="In dbSNP:rs3848570.">
    <original>R</original>
    <variation>H</variation>
    <location>
        <position position="2471"/>
    </location>
</feature>
<feature type="sequence variant" id="VAR_055750" description="In dbSNP:rs35477781.">
    <original>H</original>
    <variation>Q</variation>
    <location>
        <position position="2540"/>
    </location>
</feature>
<feature type="sequence variant" id="VAR_055751" description="In dbSNP:rs35318692.">
    <original>V</original>
    <variation>I</variation>
    <location>
        <position position="2594"/>
    </location>
</feature>
<feature type="sequence variant" id="VAR_019506" description="In dbSNP:rs7257948." evidence="5 6 7">
    <original>E</original>
    <variation>D</variation>
    <location>
        <position position="2610"/>
    </location>
</feature>
<keyword id="KW-0106">Calcium</keyword>
<keyword id="KW-1015">Disulfide bond</keyword>
<keyword id="KW-0245">EGF-like domain</keyword>
<keyword id="KW-0272">Extracellular matrix</keyword>
<keyword id="KW-0325">Glycoprotein</keyword>
<keyword id="KW-1267">Proteomics identification</keyword>
<keyword id="KW-1185">Reference proteome</keyword>
<keyword id="KW-0677">Repeat</keyword>
<keyword id="KW-0964">Secreted</keyword>
<keyword id="KW-0732">Signal</keyword>
<proteinExistence type="evidence at protein level"/>
<reference key="1">
    <citation type="journal article" date="2004" name="Genomics">
        <title>Differential expression of fibrillin-3 adds to microfibril variety in human and avian, but not rodent, connective tissues.</title>
        <authorList>
            <person name="Corson G.M."/>
            <person name="Charbonneau N.L."/>
            <person name="Keene D.R."/>
            <person name="Sakai L.Y."/>
        </authorList>
    </citation>
    <scope>NUCLEOTIDE SEQUENCE [MRNA]</scope>
    <scope>FUNCTION</scope>
    <scope>SUBCELLULAR LOCATION</scope>
    <scope>TISSUE SPECIFICITY</scope>
    <scope>VARIANTS ASN-662; SER-1614 AND ASP-2610</scope>
</reference>
<reference key="2">
    <citation type="journal article" date="2004" name="J. Hum. Genet.">
        <title>Three novel mutations of the fibrillin-1 gene and ten single nucleotide polymorphisms of the fibrillin-3 gene in Marfan syndrome patients.</title>
        <authorList>
            <person name="Uyeda T."/>
            <person name="Takahashi T."/>
            <person name="Eto S."/>
            <person name="Sato T."/>
            <person name="Xu G."/>
            <person name="Kanezaki R."/>
            <person name="Toki T."/>
            <person name="Yonesaka S."/>
            <person name="Ito E."/>
        </authorList>
    </citation>
    <scope>NUCLEOTIDE SEQUENCE [GENOMIC DNA]</scope>
    <scope>VARIANTS GLN-473; ASN-662; LEU-935; PHE-938; TRP-1083; SER-1614; LYS-1869; PRO-1904 AND ASP-2610</scope>
</reference>
<reference key="3">
    <citation type="journal article" date="2001" name="DNA Res.">
        <title>Prediction of the coding sequences of unidentified human genes. XX. The complete sequences of 100 new cDNA clones from brain which code for large proteins in vitro.</title>
        <authorList>
            <person name="Nagase T."/>
            <person name="Nakayama M."/>
            <person name="Nakajima D."/>
            <person name="Kikuno R."/>
            <person name="Ohara O."/>
        </authorList>
    </citation>
    <scope>NUCLEOTIDE SEQUENCE [LARGE SCALE MRNA]</scope>
    <scope>VARIANTS ASN-662; ILE-1326; GLN-1806 AND ASP-2610</scope>
    <source>
        <tissue>Brain</tissue>
    </source>
</reference>
<reference key="4">
    <citation type="submission" date="2005-08" db="EMBL/GenBank/DDBJ databases">
        <authorList>
            <person name="Nakajima D."/>
            <person name="Nakayama M."/>
            <person name="Kikuno R."/>
            <person name="Nagase T."/>
            <person name="Ohara O."/>
        </authorList>
    </citation>
    <scope>SEQUENCE REVISION</scope>
</reference>
<reference key="5">
    <citation type="journal article" date="2004" name="Nature">
        <title>The DNA sequence and biology of human chromosome 19.</title>
        <authorList>
            <person name="Grimwood J."/>
            <person name="Gordon L.A."/>
            <person name="Olsen A.S."/>
            <person name="Terry A."/>
            <person name="Schmutz J."/>
            <person name="Lamerdin J.E."/>
            <person name="Hellsten U."/>
            <person name="Goodstein D."/>
            <person name="Couronne O."/>
            <person name="Tran-Gyamfi M."/>
            <person name="Aerts A."/>
            <person name="Altherr M."/>
            <person name="Ashworth L."/>
            <person name="Bajorek E."/>
            <person name="Black S."/>
            <person name="Branscomb E."/>
            <person name="Caenepeel S."/>
            <person name="Carrano A.V."/>
            <person name="Caoile C."/>
            <person name="Chan Y.M."/>
            <person name="Christensen M."/>
            <person name="Cleland C.A."/>
            <person name="Copeland A."/>
            <person name="Dalin E."/>
            <person name="Dehal P."/>
            <person name="Denys M."/>
            <person name="Detter J.C."/>
            <person name="Escobar J."/>
            <person name="Flowers D."/>
            <person name="Fotopulos D."/>
            <person name="Garcia C."/>
            <person name="Georgescu A.M."/>
            <person name="Glavina T."/>
            <person name="Gomez M."/>
            <person name="Gonzales E."/>
            <person name="Groza M."/>
            <person name="Hammon N."/>
            <person name="Hawkins T."/>
            <person name="Haydu L."/>
            <person name="Ho I."/>
            <person name="Huang W."/>
            <person name="Israni S."/>
            <person name="Jett J."/>
            <person name="Kadner K."/>
            <person name="Kimball H."/>
            <person name="Kobayashi A."/>
            <person name="Larionov V."/>
            <person name="Leem S.-H."/>
            <person name="Lopez F."/>
            <person name="Lou Y."/>
            <person name="Lowry S."/>
            <person name="Malfatti S."/>
            <person name="Martinez D."/>
            <person name="McCready P.M."/>
            <person name="Medina C."/>
            <person name="Morgan J."/>
            <person name="Nelson K."/>
            <person name="Nolan M."/>
            <person name="Ovcharenko I."/>
            <person name="Pitluck S."/>
            <person name="Pollard M."/>
            <person name="Popkie A.P."/>
            <person name="Predki P."/>
            <person name="Quan G."/>
            <person name="Ramirez L."/>
            <person name="Rash S."/>
            <person name="Retterer J."/>
            <person name="Rodriguez A."/>
            <person name="Rogers S."/>
            <person name="Salamov A."/>
            <person name="Salazar A."/>
            <person name="She X."/>
            <person name="Smith D."/>
            <person name="Slezak T."/>
            <person name="Solovyev V."/>
            <person name="Thayer N."/>
            <person name="Tice H."/>
            <person name="Tsai M."/>
            <person name="Ustaszewska A."/>
            <person name="Vo N."/>
            <person name="Wagner M."/>
            <person name="Wheeler J."/>
            <person name="Wu K."/>
            <person name="Xie G."/>
            <person name="Yang J."/>
            <person name="Dubchak I."/>
            <person name="Furey T.S."/>
            <person name="DeJong P."/>
            <person name="Dickson M."/>
            <person name="Gordon D."/>
            <person name="Eichler E.E."/>
            <person name="Pennacchio L.A."/>
            <person name="Richardson P."/>
            <person name="Stubbs L."/>
            <person name="Rokhsar D.S."/>
            <person name="Myers R.M."/>
            <person name="Rubin E.M."/>
            <person name="Lucas S.M."/>
        </authorList>
    </citation>
    <scope>NUCLEOTIDE SEQUENCE [LARGE SCALE GENOMIC DNA]</scope>
</reference>
<accession>Q75N90</accession>
<accession>Q75N91</accession>
<accession>Q75N92</accession>
<accession>Q75N93</accession>
<accession>Q86SJ5</accession>
<accession>Q96JP8</accession>
<evidence type="ECO:0000250" key="1"/>
<evidence type="ECO:0000250" key="2">
    <source>
        <dbReference type="UniProtKB" id="P35555"/>
    </source>
</evidence>
<evidence type="ECO:0000255" key="3"/>
<evidence type="ECO:0000255" key="4">
    <source>
        <dbReference type="PROSITE-ProRule" id="PRU00076"/>
    </source>
</evidence>
<evidence type="ECO:0000269" key="5">
    <source>
    </source>
</evidence>
<evidence type="ECO:0000269" key="6">
    <source>
    </source>
</evidence>
<evidence type="ECO:0000269" key="7">
    <source>
    </source>
</evidence>
<evidence type="ECO:0000305" key="8"/>
<gene>
    <name type="primary">FBN3</name>
    <name type="synonym">KIAA1776</name>
</gene>
<sequence>MTLEGLYLARGPLARLLLAWSALLCMAGGQGRWDGALEAAGPGRVRRRGSPGILQGPNVCGSRFHAYCCPGWRTFPGRSQCVVPICRRACGEGFCSQPNLCTCADGTLAPSCGVSRGSGCSVSCMNGGTCRGASCLCQKGYTGTVCGQPICDRGCHNGGRCIGPNRCACVYGFMGPQCERDYRTGPCFGQVGPEGCQHQLTGLVCTKALCCATVGRAWGLPCELCPAQPHPCRRGFIPNIHTGACQDVDECQAVPGLCQGGSCVNMVGSFHCRCPVGHRLSDSSAACEDYRAGACFSVLFGGRCAGDLAGHYTRRQCCCDRGRCWAAGPVPELCPPRGSNEFQQLCAQRLPLLPGHPGLFPGLLGFGSNGMGPPLGPARLNPHGSDARGIPSLGPGNSNIGTATLNQTIDICRHFTNLCLNGRCLPTPSSYRCECNVGYTQDVRGECIDVDECTSSPCHHGDCVNIPGTYHCRCYPGFQATPTRQACVDVDECIVSGGLCHLGRCVNTEGSFQCVCNAGFELSPDGKNCVDHNECATSTMCVNGVCLNEDGSFSCLCKPGFLLAPGGHYCMDIDECQTPGICVNGHCTNTEGSFRCQCLGGLAVGTDGRVCVDTHVRSTCYGAIEKGSCARPFPGTVTKSECCCANPDHGFGEPCQLCPAKDSAEFQALCSSGLGITTDGRDINECALDPEVCANGVCENLRGSYRCVCNLGYEAGASGKDCTDVDECALNSLLCDNGWCQNSPGSYSCSCPPGFHFWQDTEICKDVDECLSSPCVSGVCRNLAGSYTCKCGPGSRLDPSGTFCLDSTKGTCWLKIQESRCEVNLQGASLRSECCATLGAAWGSPCERCEIDPACARGFARMTGVTCDDVNECESFPGVCPNGRCVNTAGSFRCECPEGLMLDASGRLCVDVRLEPCFLRWDEDECGVTLPGKYRMDVCCCSIGAVWGVECEACPDPESLEFASLCPRGLGFASRDFLSGRPFYKDVNECKVFPGLCTHGTCRNTVGSFHCACAGGFALDAQERNCTDIDECRISPDLCGQGTCVNTPGSFECECFPGYESGFMLMKNCMDVDECARDPLLCRGGTCTNTDGSYKCQCPPGHELTAKGTACEDIDECSLSDGLCPHGQCVNVIGAFQCSCHAGFQSTPDRQGCVDINECRVQNGGCDVHCINTEGSYRCSCGQGYSLMPDGRACADVDECEENPRVCDQGHCTNMPGGHRCLCYDGFMATPDMRTCVDVDECDLNPHICLHGDCENTKGSFVCHCQLGYMVRKGATGCSDVDECEVGGHNCDSHASCLNIPGSFSCRCLPGWVGDGFECHDLDECVSQEHRCSPRGDCLNVPGSYRCTCRQGFAGDGFFCEDRDECAENVDLCDNGQCLNAPGGYRCECEMGFDPTEDHRACQDVDECAQGNLCAFGSCENLPGMFRCICNGGYELDRGGGNCTDINECADPVNCINGVCINTPGSYLCSCPQDFELNPSGVGCVDTRAGNCFLETHDRGDSGISCSAEIGVGVTRASCCCSLGRAWGNPCELCPMANTTEYRTLCPGGEGFQPNRITVILEDIDECQELPGLCQGGDCVNTFGSFQCECPPGYHLSEHTRICEDIDECSTHSGICGPGTCYNTLGNYTCVCPAEYLQVNGGNNCMDMRKSVCFRHYNGTCQNELAFNVTRKMCCCSYNIGQAWNRPCEACPTPISPDYQILCGNQAPGFLTDIHTGKPLDIDECGEIPAICANGICINQIGSFRCECPAGFNYNSILLACEDVDECGSRESPCQQNADCINIPGSYRCKCTRGYKLSPGGACVGRNECREIPNVCSHGDCMDTEGSYMCLCHRGFQASADQTLCMDIDECDRQPCGNGTCKNIIGSYNCLCFPGFVVTHNGDCVDFDECTTLVGQVCRFGHCLNTAGSFHCLCQDGFELTADGKNCVDTNECLSLAGTCLPGTCQNLEGSFRCICPPGFQVQSDHCIDIDECSEEPNLCLFGTCTNSPGSFQCLCPPGFVLSDNGHRCFDTRQSFCFTRFEAGKCSVPKAFNTTKTRCCCSKRPGEGWGDPCELCPQEGSAAFQELCPFGHGAVPGPDDSREDVNECAENPGVCTNGVCVNTDGSFRCECPFGYSLDFTGINCVDTDECSVGHPCGQGTCTNVIGGFECACADGFEPGLMMTCEDIDECSLNPLLCAFRCHNTEGSYLCTCPAGYTLREDGAMCRDVDECADGQQDCHARGMECKNLIGTFACVCPPGMRPLPGSGEGCTDDNECHAQPDLCVNGRCVNTAGSFRCDCDEGFQPSPTLTECHDIRQGPCFAEVLQTMCRSLSSSSEAVTRAECCCGGGRGWGPRCELCPLPGTSAYRKLCPHGSGYTAEGRDVDECRMLAHLCAHGECINSLGSFRCHCQAGYTPDATATTCLDMDECSQVPKPCTFLCKNTKGSFLCSCPRGYLLEEDGRTCKDLDECTSRQHNCQFLCVNTVGAFTCRCPPGFTQHHQACFDNDECSAQPGPCGAHGHCHNTPGSFRCECHQGFTLVSSGHGCEDVNECDGPHRCQHGCQNQLGGYRCSCPQGFTQHSQWAQCVDENECALSPPTCGSASCRNTLGGFRCVCPSGFDFDQALGGCQEVDECAGRRGPCSYSCANTPGGFLCGCPQGYFRAGQGHCVSGLGFSPGPQDTPDKEELLSSEACYECKINGLSPRDRPRRSAHRDHQVNLATLDSEALLTLGLNLSHLGRAERILELRPALEGLEGRIRYVIVRGNEQGFFRMHHLRGVSSLQLGRRRPGPGTYRLEVVSHMAGPWGVQPEGQPGPWGQALRLKVQLQLL</sequence>
<name>FBN3_HUMAN</name>
<protein>
    <recommendedName>
        <fullName>Fibrillin-3</fullName>
    </recommendedName>
    <component>
        <recommendedName>
            <fullName evidence="8">Fibrillin-3 C-terminal peptide</fullName>
        </recommendedName>
    </component>
</protein>
<dbReference type="EMBL" id="AY165863">
    <property type="protein sequence ID" value="AAO18145.1"/>
    <property type="molecule type" value="mRNA"/>
</dbReference>
<dbReference type="EMBL" id="AY165864">
    <property type="protein sequence ID" value="AAO18146.1"/>
    <property type="molecule type" value="mRNA"/>
</dbReference>
<dbReference type="EMBL" id="AY165865">
    <property type="protein sequence ID" value="AAO18147.1"/>
    <property type="molecule type" value="mRNA"/>
</dbReference>
<dbReference type="EMBL" id="AB177797">
    <property type="protein sequence ID" value="BAD16733.1"/>
    <property type="molecule type" value="Genomic_DNA"/>
</dbReference>
<dbReference type="EMBL" id="AB177798">
    <property type="protein sequence ID" value="BAD16734.1"/>
    <property type="molecule type" value="Genomic_DNA"/>
</dbReference>
<dbReference type="EMBL" id="AB177799">
    <property type="protein sequence ID" value="BAD16735.1"/>
    <property type="molecule type" value="Genomic_DNA"/>
</dbReference>
<dbReference type="EMBL" id="AB177800">
    <property type="protein sequence ID" value="BAD16736.1"/>
    <property type="molecule type" value="Genomic_DNA"/>
</dbReference>
<dbReference type="EMBL" id="AB053450">
    <property type="protein sequence ID" value="BAB47408.2"/>
    <property type="status" value="ALT_INIT"/>
    <property type="molecule type" value="mRNA"/>
</dbReference>
<dbReference type="EMBL" id="AC008946">
    <property type="status" value="NOT_ANNOTATED_CDS"/>
    <property type="molecule type" value="Genomic_DNA"/>
</dbReference>
<dbReference type="EMBL" id="AC022146">
    <property type="status" value="NOT_ANNOTATED_CDS"/>
    <property type="molecule type" value="Genomic_DNA"/>
</dbReference>
<dbReference type="CCDS" id="CCDS12196.1"/>
<dbReference type="RefSeq" id="NP_001308360.1">
    <property type="nucleotide sequence ID" value="NM_001321431.2"/>
</dbReference>
<dbReference type="RefSeq" id="NP_115823.3">
    <property type="nucleotide sequence ID" value="NM_032447.4"/>
</dbReference>
<dbReference type="RefSeq" id="XP_016882861.1">
    <property type="nucleotide sequence ID" value="XM_017027372.2"/>
</dbReference>
<dbReference type="SMR" id="Q75N90"/>
<dbReference type="BioGRID" id="124100">
    <property type="interactions" value="19"/>
</dbReference>
<dbReference type="FunCoup" id="Q75N90">
    <property type="interactions" value="18"/>
</dbReference>
<dbReference type="IntAct" id="Q75N90">
    <property type="interactions" value="15"/>
</dbReference>
<dbReference type="MINT" id="Q75N90"/>
<dbReference type="STRING" id="9606.ENSP00000270509"/>
<dbReference type="DrugBank" id="DB11093">
    <property type="generic name" value="Calcium citrate"/>
</dbReference>
<dbReference type="DrugBank" id="DB11348">
    <property type="generic name" value="Calcium Phosphate"/>
</dbReference>
<dbReference type="DrugBank" id="DB14481">
    <property type="generic name" value="Calcium phosphate dihydrate"/>
</dbReference>
<dbReference type="GlyConnect" id="1237">
    <property type="glycosylation" value="13 N-Linked glycans (2 sites)"/>
</dbReference>
<dbReference type="GlyCosmos" id="Q75N90">
    <property type="glycosylation" value="10 sites, 13 glycans"/>
</dbReference>
<dbReference type="GlyGen" id="Q75N90">
    <property type="glycosylation" value="11 sites, 14 N-linked glycans (2 sites)"/>
</dbReference>
<dbReference type="iPTMnet" id="Q75N90"/>
<dbReference type="PhosphoSitePlus" id="Q75N90"/>
<dbReference type="SwissPalm" id="Q75N90"/>
<dbReference type="BioMuta" id="FBN3"/>
<dbReference type="DMDM" id="296439346"/>
<dbReference type="jPOST" id="Q75N90"/>
<dbReference type="MassIVE" id="Q75N90"/>
<dbReference type="PaxDb" id="9606-ENSP00000470498"/>
<dbReference type="PeptideAtlas" id="Q75N90"/>
<dbReference type="ProteomicsDB" id="68644"/>
<dbReference type="Antibodypedia" id="63727">
    <property type="antibodies" value="22 antibodies from 9 providers"/>
</dbReference>
<dbReference type="DNASU" id="84467"/>
<dbReference type="Ensembl" id="ENST00000270509.6">
    <property type="protein sequence ID" value="ENSP00000270509.2"/>
    <property type="gene ID" value="ENSG00000142449.13"/>
</dbReference>
<dbReference type="Ensembl" id="ENST00000600128.6">
    <property type="protein sequence ID" value="ENSP00000470498.1"/>
    <property type="gene ID" value="ENSG00000142449.13"/>
</dbReference>
<dbReference type="Ensembl" id="ENST00000601739.5">
    <property type="protein sequence ID" value="ENSP00000472324.1"/>
    <property type="gene ID" value="ENSG00000142449.13"/>
</dbReference>
<dbReference type="GeneID" id="84467"/>
<dbReference type="KEGG" id="hsa:84467"/>
<dbReference type="MANE-Select" id="ENST00000600128.6">
    <property type="protein sequence ID" value="ENSP00000470498.1"/>
    <property type="RefSeq nucleotide sequence ID" value="NM_032447.5"/>
    <property type="RefSeq protein sequence ID" value="NP_115823.3"/>
</dbReference>
<dbReference type="UCSC" id="uc002mjf.4">
    <property type="organism name" value="human"/>
</dbReference>
<dbReference type="AGR" id="HGNC:18794"/>
<dbReference type="CTD" id="84467"/>
<dbReference type="DisGeNET" id="84467"/>
<dbReference type="GeneCards" id="FBN3"/>
<dbReference type="HGNC" id="HGNC:18794">
    <property type="gene designation" value="FBN3"/>
</dbReference>
<dbReference type="HPA" id="ENSG00000142449">
    <property type="expression patterns" value="Tissue enhanced (kidney, salivary gland)"/>
</dbReference>
<dbReference type="MalaCards" id="FBN3"/>
<dbReference type="MIM" id="608529">
    <property type="type" value="gene"/>
</dbReference>
<dbReference type="neXtProt" id="NX_Q75N90"/>
<dbReference type="OpenTargets" id="ENSG00000142449"/>
<dbReference type="PharmGKB" id="PA38681"/>
<dbReference type="VEuPathDB" id="HostDB:ENSG00000142449"/>
<dbReference type="eggNOG" id="KOG1217">
    <property type="taxonomic scope" value="Eukaryota"/>
</dbReference>
<dbReference type="GeneTree" id="ENSGT00950000183158"/>
<dbReference type="HOGENOM" id="CLU_000233_0_0_1"/>
<dbReference type="InParanoid" id="Q75N90"/>
<dbReference type="OMA" id="QGHCVFG"/>
<dbReference type="OrthoDB" id="4062651at2759"/>
<dbReference type="PAN-GO" id="Q75N90">
    <property type="GO annotations" value="3 GO annotations based on evolutionary models"/>
</dbReference>
<dbReference type="PhylomeDB" id="Q75N90"/>
<dbReference type="TreeFam" id="TF316849"/>
<dbReference type="PathwayCommons" id="Q75N90"/>
<dbReference type="Reactome" id="R-HSA-1474228">
    <property type="pathway name" value="Degradation of the extracellular matrix"/>
</dbReference>
<dbReference type="Reactome" id="R-HSA-1566948">
    <property type="pathway name" value="Elastic fibre formation"/>
</dbReference>
<dbReference type="Reactome" id="R-HSA-2129379">
    <property type="pathway name" value="Molecules associated with elastic fibres"/>
</dbReference>
<dbReference type="SignaLink" id="Q75N90"/>
<dbReference type="BioGRID-ORCS" id="84467">
    <property type="hits" value="32 hits in 1145 CRISPR screens"/>
</dbReference>
<dbReference type="ChiTaRS" id="FBN3">
    <property type="organism name" value="human"/>
</dbReference>
<dbReference type="GenomeRNAi" id="84467"/>
<dbReference type="Pharos" id="Q75N90">
    <property type="development level" value="Tbio"/>
</dbReference>
<dbReference type="PRO" id="PR:Q75N90"/>
<dbReference type="Proteomes" id="UP000005640">
    <property type="component" value="Chromosome 19"/>
</dbReference>
<dbReference type="RNAct" id="Q75N90">
    <property type="molecule type" value="protein"/>
</dbReference>
<dbReference type="Bgee" id="ENSG00000142449">
    <property type="expression patterns" value="Expressed in cortical plate and 115 other cell types or tissues"/>
</dbReference>
<dbReference type="ExpressionAtlas" id="Q75N90">
    <property type="expression patterns" value="baseline and differential"/>
</dbReference>
<dbReference type="GO" id="GO:0031012">
    <property type="term" value="C:extracellular matrix"/>
    <property type="evidence" value="ECO:0000318"/>
    <property type="project" value="GO_Central"/>
</dbReference>
<dbReference type="GO" id="GO:0005576">
    <property type="term" value="C:extracellular region"/>
    <property type="evidence" value="ECO:0007669"/>
    <property type="project" value="UniProtKB-KW"/>
</dbReference>
<dbReference type="GO" id="GO:0001527">
    <property type="term" value="C:microfibril"/>
    <property type="evidence" value="ECO:0007669"/>
    <property type="project" value="UniProtKB-ARBA"/>
</dbReference>
<dbReference type="GO" id="GO:0005509">
    <property type="term" value="F:calcium ion binding"/>
    <property type="evidence" value="ECO:0007669"/>
    <property type="project" value="InterPro"/>
</dbReference>
<dbReference type="GO" id="GO:0005201">
    <property type="term" value="F:extracellular matrix structural constituent"/>
    <property type="evidence" value="ECO:0000318"/>
    <property type="project" value="GO_Central"/>
</dbReference>
<dbReference type="GO" id="GO:0009653">
    <property type="term" value="P:anatomical structure morphogenesis"/>
    <property type="evidence" value="ECO:0000318"/>
    <property type="project" value="GO_Central"/>
</dbReference>
<dbReference type="CDD" id="cd00054">
    <property type="entry name" value="EGF_CA"/>
    <property type="match status" value="24"/>
</dbReference>
<dbReference type="FunFam" id="2.10.25.10:FF:000005">
    <property type="entry name" value="Fibrillin 2"/>
    <property type="match status" value="2"/>
</dbReference>
<dbReference type="FunFam" id="2.10.25.10:FF:000023">
    <property type="entry name" value="Fibrillin 2"/>
    <property type="match status" value="2"/>
</dbReference>
<dbReference type="FunFam" id="2.10.25.10:FF:000038">
    <property type="entry name" value="Fibrillin 2"/>
    <property type="match status" value="3"/>
</dbReference>
<dbReference type="FunFam" id="2.10.25.10:FF:000058">
    <property type="entry name" value="Fibrillin 2"/>
    <property type="match status" value="1"/>
</dbReference>
<dbReference type="FunFam" id="2.10.25.10:FF:000071">
    <property type="entry name" value="Fibrillin 2"/>
    <property type="match status" value="1"/>
</dbReference>
<dbReference type="FunFam" id="2.10.25.10:FF:000086">
    <property type="entry name" value="Fibrillin 2"/>
    <property type="match status" value="1"/>
</dbReference>
<dbReference type="FunFam" id="2.10.25.10:FF:000087">
    <property type="entry name" value="Fibrillin 2"/>
    <property type="match status" value="1"/>
</dbReference>
<dbReference type="FunFam" id="2.10.25.10:FF:000097">
    <property type="entry name" value="Fibrillin 2"/>
    <property type="match status" value="1"/>
</dbReference>
<dbReference type="FunFam" id="2.10.25.10:FF:000149">
    <property type="entry name" value="Fibrillin 2"/>
    <property type="match status" value="1"/>
</dbReference>
<dbReference type="FunFam" id="2.10.25.10:FF:000171">
    <property type="entry name" value="Fibrillin 2"/>
    <property type="match status" value="1"/>
</dbReference>
<dbReference type="FunFam" id="2.10.25.10:FF:000223">
    <property type="entry name" value="Fibrillin 2"/>
    <property type="match status" value="1"/>
</dbReference>
<dbReference type="FunFam" id="3.90.290.10:FF:000005">
    <property type="entry name" value="Fibrillin 2"/>
    <property type="match status" value="1"/>
</dbReference>
<dbReference type="FunFam" id="3.90.290.10:FF:000006">
    <property type="entry name" value="Fibrillin 2"/>
    <property type="match status" value="1"/>
</dbReference>
<dbReference type="FunFam" id="3.90.290.10:FF:000007">
    <property type="entry name" value="Fibrillin 2"/>
    <property type="match status" value="1"/>
</dbReference>
<dbReference type="FunFam" id="3.90.290.10:FF:000009">
    <property type="entry name" value="Fibrillin 2"/>
    <property type="match status" value="1"/>
</dbReference>
<dbReference type="FunFam" id="3.90.290.10:FF:000010">
    <property type="entry name" value="Fibrillin 2"/>
    <property type="match status" value="1"/>
</dbReference>
<dbReference type="FunFam" id="3.90.290.10:FF:000011">
    <property type="entry name" value="Fibrillin 2"/>
    <property type="match status" value="1"/>
</dbReference>
<dbReference type="FunFam" id="2.10.25.10:FF:000133">
    <property type="entry name" value="Fibrillin 3"/>
    <property type="match status" value="1"/>
</dbReference>
<dbReference type="FunFam" id="2.10.25.10:FF:000618">
    <property type="entry name" value="Fibrillin 3"/>
    <property type="match status" value="1"/>
</dbReference>
<dbReference type="FunFam" id="3.90.290.10:FF:000003">
    <property type="entry name" value="Fibrillin 3"/>
    <property type="match status" value="1"/>
</dbReference>
<dbReference type="FunFam" id="3.90.290.10:FF:000008">
    <property type="entry name" value="Fibrillin 3"/>
    <property type="match status" value="1"/>
</dbReference>
<dbReference type="FunFam" id="3.90.290.10:FF:000020">
    <property type="entry name" value="Fibrillin-1"/>
    <property type="match status" value="1"/>
</dbReference>
<dbReference type="FunFam" id="2.10.25.10:FF:000003">
    <property type="entry name" value="fibrillin-1 isoform X1"/>
    <property type="match status" value="15"/>
</dbReference>
<dbReference type="FunFam" id="2.10.25.10:FF:000002">
    <property type="entry name" value="Latent-transforming growth factor beta-binding protein 3"/>
    <property type="match status" value="1"/>
</dbReference>
<dbReference type="FunFam" id="2.10.25.10:FF:000014">
    <property type="entry name" value="Latent-transforming growth factor beta-binding protein 3"/>
    <property type="match status" value="1"/>
</dbReference>
<dbReference type="FunFam" id="2.10.25.10:FF:000010">
    <property type="entry name" value="Pro-epidermal growth factor"/>
    <property type="match status" value="2"/>
</dbReference>
<dbReference type="FunFam" id="2.10.25.10:FF:000096">
    <property type="entry name" value="Putative fibrillin 2"/>
    <property type="match status" value="1"/>
</dbReference>
<dbReference type="FunFam" id="2.10.25.10:FF:000008">
    <property type="entry name" value="Signal peptide, CUB domain, EGF-like 2"/>
    <property type="match status" value="1"/>
</dbReference>
<dbReference type="Gene3D" id="2.10.25.10">
    <property type="entry name" value="Laminin"/>
    <property type="match status" value="45"/>
</dbReference>
<dbReference type="Gene3D" id="3.90.290.10">
    <property type="entry name" value="TGF-beta binding (TB) domain"/>
    <property type="match status" value="9"/>
</dbReference>
<dbReference type="InterPro" id="IPR026823">
    <property type="entry name" value="cEGF"/>
</dbReference>
<dbReference type="InterPro" id="IPR001881">
    <property type="entry name" value="EGF-like_Ca-bd_dom"/>
</dbReference>
<dbReference type="InterPro" id="IPR013032">
    <property type="entry name" value="EGF-like_CS"/>
</dbReference>
<dbReference type="InterPro" id="IPR000742">
    <property type="entry name" value="EGF-like_dom"/>
</dbReference>
<dbReference type="InterPro" id="IPR000152">
    <property type="entry name" value="EGF-type_Asp/Asn_hydroxyl_site"/>
</dbReference>
<dbReference type="InterPro" id="IPR018097">
    <property type="entry name" value="EGF_Ca-bd_CS"/>
</dbReference>
<dbReference type="InterPro" id="IPR024731">
    <property type="entry name" value="EGF_dom"/>
</dbReference>
<dbReference type="InterPro" id="IPR049388">
    <property type="entry name" value="FBN_EGF_N"/>
</dbReference>
<dbReference type="InterPro" id="IPR040872">
    <property type="entry name" value="Fibrillin_U_N"/>
</dbReference>
<dbReference type="InterPro" id="IPR009030">
    <property type="entry name" value="Growth_fac_rcpt_cys_sf"/>
</dbReference>
<dbReference type="InterPro" id="IPR049883">
    <property type="entry name" value="NOTCH1_EGF-like"/>
</dbReference>
<dbReference type="InterPro" id="IPR017878">
    <property type="entry name" value="TB_dom"/>
</dbReference>
<dbReference type="InterPro" id="IPR036773">
    <property type="entry name" value="TB_dom_sf"/>
</dbReference>
<dbReference type="InterPro" id="IPR052080">
    <property type="entry name" value="vWF_C/EGF_Fibrillin"/>
</dbReference>
<dbReference type="PANTHER" id="PTHR47333:SF4">
    <property type="entry name" value="EGF-LIKE DOMAIN-CONTAINING PROTEIN"/>
    <property type="match status" value="1"/>
</dbReference>
<dbReference type="PANTHER" id="PTHR47333">
    <property type="entry name" value="VON WILLEBRAND FACTOR C AND EGF DOMAIN-CONTAINING PROTEIN"/>
    <property type="match status" value="1"/>
</dbReference>
<dbReference type="Pfam" id="PF12662">
    <property type="entry name" value="cEGF"/>
    <property type="match status" value="3"/>
</dbReference>
<dbReference type="Pfam" id="PF12947">
    <property type="entry name" value="EGF_3"/>
    <property type="match status" value="1"/>
</dbReference>
<dbReference type="Pfam" id="PF07645">
    <property type="entry name" value="EGF_CA"/>
    <property type="match status" value="35"/>
</dbReference>
<dbReference type="Pfam" id="PF21364">
    <property type="entry name" value="EGF_FBN_1st"/>
    <property type="match status" value="1"/>
</dbReference>
<dbReference type="Pfam" id="PF18193">
    <property type="entry name" value="Fibrillin_U_N"/>
    <property type="match status" value="1"/>
</dbReference>
<dbReference type="Pfam" id="PF12661">
    <property type="entry name" value="hEGF"/>
    <property type="match status" value="2"/>
</dbReference>
<dbReference type="Pfam" id="PF00683">
    <property type="entry name" value="TB"/>
    <property type="match status" value="9"/>
</dbReference>
<dbReference type="PIRSF" id="PIRSF036312">
    <property type="entry name" value="Fibrillin"/>
    <property type="match status" value="1"/>
</dbReference>
<dbReference type="SMART" id="SM00181">
    <property type="entry name" value="EGF"/>
    <property type="match status" value="46"/>
</dbReference>
<dbReference type="SMART" id="SM00179">
    <property type="entry name" value="EGF_CA"/>
    <property type="match status" value="43"/>
</dbReference>
<dbReference type="SUPFAM" id="SSF57196">
    <property type="entry name" value="EGF/Laminin"/>
    <property type="match status" value="8"/>
</dbReference>
<dbReference type="SUPFAM" id="SSF57184">
    <property type="entry name" value="Growth factor receptor domain"/>
    <property type="match status" value="12"/>
</dbReference>
<dbReference type="SUPFAM" id="SSF57581">
    <property type="entry name" value="TB module/8-cys domain"/>
    <property type="match status" value="9"/>
</dbReference>
<dbReference type="PROSITE" id="PS00010">
    <property type="entry name" value="ASX_HYDROXYL"/>
    <property type="match status" value="41"/>
</dbReference>
<dbReference type="PROSITE" id="PS00022">
    <property type="entry name" value="EGF_1"/>
    <property type="match status" value="2"/>
</dbReference>
<dbReference type="PROSITE" id="PS01186">
    <property type="entry name" value="EGF_2"/>
    <property type="match status" value="36"/>
</dbReference>
<dbReference type="PROSITE" id="PS50026">
    <property type="entry name" value="EGF_3"/>
    <property type="match status" value="44"/>
</dbReference>
<dbReference type="PROSITE" id="PS01187">
    <property type="entry name" value="EGF_CA"/>
    <property type="match status" value="40"/>
</dbReference>
<dbReference type="PROSITE" id="PS51364">
    <property type="entry name" value="TB"/>
    <property type="match status" value="9"/>
</dbReference>
<comment type="function">
    <molecule>Fibrillin-3</molecule>
    <text evidence="6">Fibrillins are structural components of 10-12 nm extracellular calcium-binding microfibrils, which occur either in association with elastin or in elastin-free bundles. Fibrillin-containing microfibrils provide long-term force bearing structural support.</text>
</comment>
<comment type="subcellular location">
    <subcellularLocation>
        <location evidence="6">Secreted</location>
        <location evidence="6">Extracellular space</location>
        <location evidence="6">Extracellular matrix</location>
    </subcellularLocation>
</comment>
<comment type="tissue specificity">
    <text evidence="6">Predominantly expressed in connective tissues such as skeletal muscle, tendon, skin, perichondrium and periosteum. Highly expressed in fetal lung, brain, kidney. Expressed at low level in prostate, testis, mammary gland, uterus, ovary, placenta, bladder, adrenal gland, thyroid, fetal thymus, fetal liver, liver, fetal heart and heart.</text>
</comment>
<comment type="PTM">
    <text evidence="1">Probably forms intermolecular disulfide bonds either with other FBN3 molecules or with other components of the microfibrils.</text>
</comment>
<comment type="similarity">
    <text evidence="8">Belongs to the fibrillin family.</text>
</comment>
<comment type="sequence caution" evidence="8">
    <conflict type="erroneous initiation">
        <sequence resource="EMBL-CDS" id="BAB47408"/>
    </conflict>
    <text>Extended N-terminus.</text>
</comment>
<organism>
    <name type="scientific">Homo sapiens</name>
    <name type="common">Human</name>
    <dbReference type="NCBI Taxonomy" id="9606"/>
    <lineage>
        <taxon>Eukaryota</taxon>
        <taxon>Metazoa</taxon>
        <taxon>Chordata</taxon>
        <taxon>Craniata</taxon>
        <taxon>Vertebrata</taxon>
        <taxon>Euteleostomi</taxon>
        <taxon>Mammalia</taxon>
        <taxon>Eutheria</taxon>
        <taxon>Euarchontoglires</taxon>
        <taxon>Primates</taxon>
        <taxon>Haplorrhini</taxon>
        <taxon>Catarrhini</taxon>
        <taxon>Hominidae</taxon>
        <taxon>Homo</taxon>
    </lineage>
</organism>